<gene>
    <name evidence="1" type="primary">rplF</name>
    <name type="ordered locus">LIC_12858</name>
</gene>
<keyword id="KW-0687">Ribonucleoprotein</keyword>
<keyword id="KW-0689">Ribosomal protein</keyword>
<keyword id="KW-0694">RNA-binding</keyword>
<keyword id="KW-0699">rRNA-binding</keyword>
<comment type="function">
    <text evidence="1">This protein binds to the 23S rRNA, and is important in its secondary structure. It is located near the subunit interface in the base of the L7/L12 stalk, and near the tRNA binding site of the peptidyltransferase center.</text>
</comment>
<comment type="subunit">
    <text evidence="1">Part of the 50S ribosomal subunit.</text>
</comment>
<comment type="similarity">
    <text evidence="1">Belongs to the universal ribosomal protein uL6 family.</text>
</comment>
<organism>
    <name type="scientific">Leptospira interrogans serogroup Icterohaemorrhagiae serovar copenhageni (strain Fiocruz L1-130)</name>
    <dbReference type="NCBI Taxonomy" id="267671"/>
    <lineage>
        <taxon>Bacteria</taxon>
        <taxon>Pseudomonadati</taxon>
        <taxon>Spirochaetota</taxon>
        <taxon>Spirochaetia</taxon>
        <taxon>Leptospirales</taxon>
        <taxon>Leptospiraceae</taxon>
        <taxon>Leptospira</taxon>
    </lineage>
</organism>
<protein>
    <recommendedName>
        <fullName evidence="1">Large ribosomal subunit protein uL6</fullName>
    </recommendedName>
    <alternativeName>
        <fullName evidence="2">50S ribosomal protein L6</fullName>
    </alternativeName>
</protein>
<dbReference type="EMBL" id="AE016823">
    <property type="protein sequence ID" value="AAS71411.1"/>
    <property type="molecule type" value="Genomic_DNA"/>
</dbReference>
<dbReference type="RefSeq" id="WP_000086547.1">
    <property type="nucleotide sequence ID" value="NC_005823.1"/>
</dbReference>
<dbReference type="SMR" id="Q72NH6"/>
<dbReference type="GeneID" id="61142732"/>
<dbReference type="KEGG" id="lic:LIC_12858"/>
<dbReference type="HOGENOM" id="CLU_065464_1_2_12"/>
<dbReference type="Proteomes" id="UP000007037">
    <property type="component" value="Chromosome I"/>
</dbReference>
<dbReference type="GO" id="GO:0022625">
    <property type="term" value="C:cytosolic large ribosomal subunit"/>
    <property type="evidence" value="ECO:0007669"/>
    <property type="project" value="TreeGrafter"/>
</dbReference>
<dbReference type="GO" id="GO:0019843">
    <property type="term" value="F:rRNA binding"/>
    <property type="evidence" value="ECO:0007669"/>
    <property type="project" value="UniProtKB-UniRule"/>
</dbReference>
<dbReference type="GO" id="GO:0003735">
    <property type="term" value="F:structural constituent of ribosome"/>
    <property type="evidence" value="ECO:0007669"/>
    <property type="project" value="InterPro"/>
</dbReference>
<dbReference type="GO" id="GO:0002181">
    <property type="term" value="P:cytoplasmic translation"/>
    <property type="evidence" value="ECO:0007669"/>
    <property type="project" value="TreeGrafter"/>
</dbReference>
<dbReference type="FunFam" id="3.90.930.12:FF:000001">
    <property type="entry name" value="50S ribosomal protein L6"/>
    <property type="match status" value="1"/>
</dbReference>
<dbReference type="FunFam" id="3.90.930.12:FF:000002">
    <property type="entry name" value="50S ribosomal protein L6"/>
    <property type="match status" value="1"/>
</dbReference>
<dbReference type="Gene3D" id="3.90.930.12">
    <property type="entry name" value="Ribosomal protein L6, alpha-beta domain"/>
    <property type="match status" value="2"/>
</dbReference>
<dbReference type="HAMAP" id="MF_01365_B">
    <property type="entry name" value="Ribosomal_uL6_B"/>
    <property type="match status" value="1"/>
</dbReference>
<dbReference type="InterPro" id="IPR000702">
    <property type="entry name" value="Ribosomal_uL6-like"/>
</dbReference>
<dbReference type="InterPro" id="IPR036789">
    <property type="entry name" value="Ribosomal_uL6-like_a/b-dom_sf"/>
</dbReference>
<dbReference type="InterPro" id="IPR020040">
    <property type="entry name" value="Ribosomal_uL6_a/b-dom"/>
</dbReference>
<dbReference type="InterPro" id="IPR019906">
    <property type="entry name" value="Ribosomal_uL6_bac-type"/>
</dbReference>
<dbReference type="InterPro" id="IPR002358">
    <property type="entry name" value="Ribosomal_uL6_CS"/>
</dbReference>
<dbReference type="NCBIfam" id="TIGR03654">
    <property type="entry name" value="L6_bact"/>
    <property type="match status" value="1"/>
</dbReference>
<dbReference type="PANTHER" id="PTHR11655">
    <property type="entry name" value="60S/50S RIBOSOMAL PROTEIN L6/L9"/>
    <property type="match status" value="1"/>
</dbReference>
<dbReference type="PANTHER" id="PTHR11655:SF14">
    <property type="entry name" value="LARGE RIBOSOMAL SUBUNIT PROTEIN UL6M"/>
    <property type="match status" value="1"/>
</dbReference>
<dbReference type="Pfam" id="PF00347">
    <property type="entry name" value="Ribosomal_L6"/>
    <property type="match status" value="2"/>
</dbReference>
<dbReference type="PIRSF" id="PIRSF002162">
    <property type="entry name" value="Ribosomal_L6"/>
    <property type="match status" value="1"/>
</dbReference>
<dbReference type="PRINTS" id="PR00059">
    <property type="entry name" value="RIBOSOMALL6"/>
</dbReference>
<dbReference type="SUPFAM" id="SSF56053">
    <property type="entry name" value="Ribosomal protein L6"/>
    <property type="match status" value="2"/>
</dbReference>
<dbReference type="PROSITE" id="PS00525">
    <property type="entry name" value="RIBOSOMAL_L6_1"/>
    <property type="match status" value="1"/>
</dbReference>
<feature type="chain" id="PRO_0000131054" description="Large ribosomal subunit protein uL6">
    <location>
        <begin position="1"/>
        <end position="179"/>
    </location>
</feature>
<evidence type="ECO:0000255" key="1">
    <source>
        <dbReference type="HAMAP-Rule" id="MF_01365"/>
    </source>
</evidence>
<evidence type="ECO:0000305" key="2"/>
<reference key="1">
    <citation type="journal article" date="2004" name="J. Bacteriol.">
        <title>Comparative genomics of two Leptospira interrogans serovars reveals novel insights into physiology and pathogenesis.</title>
        <authorList>
            <person name="Nascimento A.L.T.O."/>
            <person name="Ko A.I."/>
            <person name="Martins E.A.L."/>
            <person name="Monteiro-Vitorello C.B."/>
            <person name="Ho P.L."/>
            <person name="Haake D.A."/>
            <person name="Verjovski-Almeida S."/>
            <person name="Hartskeerl R.A."/>
            <person name="Marques M.V."/>
            <person name="Oliveira M.C."/>
            <person name="Menck C.F.M."/>
            <person name="Leite L.C.C."/>
            <person name="Carrer H."/>
            <person name="Coutinho L.L."/>
            <person name="Degrave W.M."/>
            <person name="Dellagostin O.A."/>
            <person name="El-Dorry H."/>
            <person name="Ferro E.S."/>
            <person name="Ferro M.I.T."/>
            <person name="Furlan L.R."/>
            <person name="Gamberini M."/>
            <person name="Giglioti E.A."/>
            <person name="Goes-Neto A."/>
            <person name="Goldman G.H."/>
            <person name="Goldman M.H.S."/>
            <person name="Harakava R."/>
            <person name="Jeronimo S.M.B."/>
            <person name="Junqueira-de-Azevedo I.L.M."/>
            <person name="Kimura E.T."/>
            <person name="Kuramae E.E."/>
            <person name="Lemos E.G.M."/>
            <person name="Lemos M.V.F."/>
            <person name="Marino C.L."/>
            <person name="Nunes L.R."/>
            <person name="de Oliveira R.C."/>
            <person name="Pereira G.G."/>
            <person name="Reis M.S."/>
            <person name="Schriefer A."/>
            <person name="Siqueira W.J."/>
            <person name="Sommer P."/>
            <person name="Tsai S.M."/>
            <person name="Simpson A.J.G."/>
            <person name="Ferro J.A."/>
            <person name="Camargo L.E.A."/>
            <person name="Kitajima J.P."/>
            <person name="Setubal J.C."/>
            <person name="Van Sluys M.A."/>
        </authorList>
    </citation>
    <scope>NUCLEOTIDE SEQUENCE [LARGE SCALE GENOMIC DNA]</scope>
    <source>
        <strain>Fiocruz L1-130</strain>
    </source>
</reference>
<name>RL6_LEPIC</name>
<accession>Q72NH6</accession>
<sequence length="179" mass="19782">MSRIGKAEIKLPDKVEVKQENANIKVKGPLGELFTPIFEGISVKTENGIVKLERSNEDQKVVALHGLTRALLMNCVKGVSQGWEKNLEITGVGYRAQKRGEDLVMSLGFSHEVVYKAPKGIKIDVQEQLKIKVSGIDKQLVGQVAADIRSKRPPEPYKGKGIKYAEEFIKKKAGKTGKK</sequence>
<proteinExistence type="inferred from homology"/>